<organism>
    <name type="scientific">Mus musculus</name>
    <name type="common">Mouse</name>
    <dbReference type="NCBI Taxonomy" id="10090"/>
    <lineage>
        <taxon>Eukaryota</taxon>
        <taxon>Metazoa</taxon>
        <taxon>Chordata</taxon>
        <taxon>Craniata</taxon>
        <taxon>Vertebrata</taxon>
        <taxon>Euteleostomi</taxon>
        <taxon>Mammalia</taxon>
        <taxon>Eutheria</taxon>
        <taxon>Euarchontoglires</taxon>
        <taxon>Glires</taxon>
        <taxon>Rodentia</taxon>
        <taxon>Myomorpha</taxon>
        <taxon>Muroidea</taxon>
        <taxon>Muridae</taxon>
        <taxon>Murinae</taxon>
        <taxon>Mus</taxon>
        <taxon>Mus</taxon>
    </lineage>
</organism>
<name>SYTC_MOUSE</name>
<reference key="1">
    <citation type="journal article" date="2005" name="Science">
        <title>The transcriptional landscape of the mammalian genome.</title>
        <authorList>
            <person name="Carninci P."/>
            <person name="Kasukawa T."/>
            <person name="Katayama S."/>
            <person name="Gough J."/>
            <person name="Frith M.C."/>
            <person name="Maeda N."/>
            <person name="Oyama R."/>
            <person name="Ravasi T."/>
            <person name="Lenhard B."/>
            <person name="Wells C."/>
            <person name="Kodzius R."/>
            <person name="Shimokawa K."/>
            <person name="Bajic V.B."/>
            <person name="Brenner S.E."/>
            <person name="Batalov S."/>
            <person name="Forrest A.R."/>
            <person name="Zavolan M."/>
            <person name="Davis M.J."/>
            <person name="Wilming L.G."/>
            <person name="Aidinis V."/>
            <person name="Allen J.E."/>
            <person name="Ambesi-Impiombato A."/>
            <person name="Apweiler R."/>
            <person name="Aturaliya R.N."/>
            <person name="Bailey T.L."/>
            <person name="Bansal M."/>
            <person name="Baxter L."/>
            <person name="Beisel K.W."/>
            <person name="Bersano T."/>
            <person name="Bono H."/>
            <person name="Chalk A.M."/>
            <person name="Chiu K.P."/>
            <person name="Choudhary V."/>
            <person name="Christoffels A."/>
            <person name="Clutterbuck D.R."/>
            <person name="Crowe M.L."/>
            <person name="Dalla E."/>
            <person name="Dalrymple B.P."/>
            <person name="de Bono B."/>
            <person name="Della Gatta G."/>
            <person name="di Bernardo D."/>
            <person name="Down T."/>
            <person name="Engstrom P."/>
            <person name="Fagiolini M."/>
            <person name="Faulkner G."/>
            <person name="Fletcher C.F."/>
            <person name="Fukushima T."/>
            <person name="Furuno M."/>
            <person name="Futaki S."/>
            <person name="Gariboldi M."/>
            <person name="Georgii-Hemming P."/>
            <person name="Gingeras T.R."/>
            <person name="Gojobori T."/>
            <person name="Green R.E."/>
            <person name="Gustincich S."/>
            <person name="Harbers M."/>
            <person name="Hayashi Y."/>
            <person name="Hensch T.K."/>
            <person name="Hirokawa N."/>
            <person name="Hill D."/>
            <person name="Huminiecki L."/>
            <person name="Iacono M."/>
            <person name="Ikeo K."/>
            <person name="Iwama A."/>
            <person name="Ishikawa T."/>
            <person name="Jakt M."/>
            <person name="Kanapin A."/>
            <person name="Katoh M."/>
            <person name="Kawasawa Y."/>
            <person name="Kelso J."/>
            <person name="Kitamura H."/>
            <person name="Kitano H."/>
            <person name="Kollias G."/>
            <person name="Krishnan S.P."/>
            <person name="Kruger A."/>
            <person name="Kummerfeld S.K."/>
            <person name="Kurochkin I.V."/>
            <person name="Lareau L.F."/>
            <person name="Lazarevic D."/>
            <person name="Lipovich L."/>
            <person name="Liu J."/>
            <person name="Liuni S."/>
            <person name="McWilliam S."/>
            <person name="Madan Babu M."/>
            <person name="Madera M."/>
            <person name="Marchionni L."/>
            <person name="Matsuda H."/>
            <person name="Matsuzawa S."/>
            <person name="Miki H."/>
            <person name="Mignone F."/>
            <person name="Miyake S."/>
            <person name="Morris K."/>
            <person name="Mottagui-Tabar S."/>
            <person name="Mulder N."/>
            <person name="Nakano N."/>
            <person name="Nakauchi H."/>
            <person name="Ng P."/>
            <person name="Nilsson R."/>
            <person name="Nishiguchi S."/>
            <person name="Nishikawa S."/>
            <person name="Nori F."/>
            <person name="Ohara O."/>
            <person name="Okazaki Y."/>
            <person name="Orlando V."/>
            <person name="Pang K.C."/>
            <person name="Pavan W.J."/>
            <person name="Pavesi G."/>
            <person name="Pesole G."/>
            <person name="Petrovsky N."/>
            <person name="Piazza S."/>
            <person name="Reed J."/>
            <person name="Reid J.F."/>
            <person name="Ring B.Z."/>
            <person name="Ringwald M."/>
            <person name="Rost B."/>
            <person name="Ruan Y."/>
            <person name="Salzberg S.L."/>
            <person name="Sandelin A."/>
            <person name="Schneider C."/>
            <person name="Schoenbach C."/>
            <person name="Sekiguchi K."/>
            <person name="Semple C.A."/>
            <person name="Seno S."/>
            <person name="Sessa L."/>
            <person name="Sheng Y."/>
            <person name="Shibata Y."/>
            <person name="Shimada H."/>
            <person name="Shimada K."/>
            <person name="Silva D."/>
            <person name="Sinclair B."/>
            <person name="Sperling S."/>
            <person name="Stupka E."/>
            <person name="Sugiura K."/>
            <person name="Sultana R."/>
            <person name="Takenaka Y."/>
            <person name="Taki K."/>
            <person name="Tammoja K."/>
            <person name="Tan S.L."/>
            <person name="Tang S."/>
            <person name="Taylor M.S."/>
            <person name="Tegner J."/>
            <person name="Teichmann S.A."/>
            <person name="Ueda H.R."/>
            <person name="van Nimwegen E."/>
            <person name="Verardo R."/>
            <person name="Wei C.L."/>
            <person name="Yagi K."/>
            <person name="Yamanishi H."/>
            <person name="Zabarovsky E."/>
            <person name="Zhu S."/>
            <person name="Zimmer A."/>
            <person name="Hide W."/>
            <person name="Bult C."/>
            <person name="Grimmond S.M."/>
            <person name="Teasdale R.D."/>
            <person name="Liu E.T."/>
            <person name="Brusic V."/>
            <person name="Quackenbush J."/>
            <person name="Wahlestedt C."/>
            <person name="Mattick J.S."/>
            <person name="Hume D.A."/>
            <person name="Kai C."/>
            <person name="Sasaki D."/>
            <person name="Tomaru Y."/>
            <person name="Fukuda S."/>
            <person name="Kanamori-Katayama M."/>
            <person name="Suzuki M."/>
            <person name="Aoki J."/>
            <person name="Arakawa T."/>
            <person name="Iida J."/>
            <person name="Imamura K."/>
            <person name="Itoh M."/>
            <person name="Kato T."/>
            <person name="Kawaji H."/>
            <person name="Kawagashira N."/>
            <person name="Kawashima T."/>
            <person name="Kojima M."/>
            <person name="Kondo S."/>
            <person name="Konno H."/>
            <person name="Nakano K."/>
            <person name="Ninomiya N."/>
            <person name="Nishio T."/>
            <person name="Okada M."/>
            <person name="Plessy C."/>
            <person name="Shibata K."/>
            <person name="Shiraki T."/>
            <person name="Suzuki S."/>
            <person name="Tagami M."/>
            <person name="Waki K."/>
            <person name="Watahiki A."/>
            <person name="Okamura-Oho Y."/>
            <person name="Suzuki H."/>
            <person name="Kawai J."/>
            <person name="Hayashizaki Y."/>
        </authorList>
    </citation>
    <scope>NUCLEOTIDE SEQUENCE [LARGE SCALE MRNA]</scope>
    <source>
        <strain>C57BL/6J</strain>
        <tissue>Amnion</tissue>
        <tissue>Bone marrow</tissue>
        <tissue>Forelimb</tissue>
        <tissue>Heart</tissue>
    </source>
</reference>
<reference key="2">
    <citation type="journal article" date="2004" name="Genome Res.">
        <title>The status, quality, and expansion of the NIH full-length cDNA project: the Mammalian Gene Collection (MGC).</title>
        <authorList>
            <consortium name="The MGC Project Team"/>
        </authorList>
    </citation>
    <scope>NUCLEOTIDE SEQUENCE [LARGE SCALE MRNA]</scope>
    <source>
        <strain>C3H/He</strain>
        <tissue>Mesenchymal stem cell</tissue>
    </source>
</reference>
<reference key="3">
    <citation type="journal article" date="2005" name="Biochem. Biophys. Res. Commun.">
        <title>Proteomic identification of proteins conjugated to ISG15 in mouse and human cells.</title>
        <authorList>
            <person name="Giannakopoulos N.V."/>
            <person name="Luo J.K."/>
            <person name="Papov V."/>
            <person name="Zou W."/>
            <person name="Lenschow D.J."/>
            <person name="Jacobs B.S."/>
            <person name="Borden E.C."/>
            <person name="Li J."/>
            <person name="Virgin H.W."/>
            <person name="Zhang D.E."/>
        </authorList>
    </citation>
    <scope>ISGYLATION</scope>
</reference>
<reference key="4">
    <citation type="journal article" date="2008" name="J. Proteome Res.">
        <title>Large-scale identification and evolution indexing of tyrosine phosphorylation sites from murine brain.</title>
        <authorList>
            <person name="Ballif B.A."/>
            <person name="Carey G.R."/>
            <person name="Sunyaev S.R."/>
            <person name="Gygi S.P."/>
        </authorList>
    </citation>
    <scope>PHOSPHORYLATION [LARGE SCALE ANALYSIS] AT TYR-297</scope>
    <scope>IDENTIFICATION BY MASS SPECTROMETRY [LARGE SCALE ANALYSIS]</scope>
    <source>
        <tissue>Brain</tissue>
    </source>
</reference>
<reference key="5">
    <citation type="journal article" date="2009" name="Mol. Cell. Proteomics">
        <title>Large scale localization of protein phosphorylation by use of electron capture dissociation mass spectrometry.</title>
        <authorList>
            <person name="Sweet S.M."/>
            <person name="Bailey C.M."/>
            <person name="Cunningham D.L."/>
            <person name="Heath J.K."/>
            <person name="Cooper H.J."/>
        </authorList>
    </citation>
    <scope>IDENTIFICATION BY MASS SPECTROMETRY [LARGE SCALE ANALYSIS]</scope>
    <source>
        <tissue>Embryonic fibroblast</tissue>
    </source>
</reference>
<reference key="6">
    <citation type="journal article" date="2010" name="Cell">
        <title>A tissue-specific atlas of mouse protein phosphorylation and expression.</title>
        <authorList>
            <person name="Huttlin E.L."/>
            <person name="Jedrychowski M.P."/>
            <person name="Elias J.E."/>
            <person name="Goswami T."/>
            <person name="Rad R."/>
            <person name="Beausoleil S.A."/>
            <person name="Villen J."/>
            <person name="Haas W."/>
            <person name="Sowa M.E."/>
            <person name="Gygi S.P."/>
        </authorList>
    </citation>
    <scope>IDENTIFICATION BY MASS SPECTROMETRY [LARGE SCALE ANALYSIS]</scope>
    <source>
        <tissue>Brain</tissue>
        <tissue>Brown adipose tissue</tissue>
        <tissue>Heart</tissue>
        <tissue>Kidney</tissue>
        <tissue>Liver</tissue>
        <tissue>Lung</tissue>
        <tissue>Pancreas</tissue>
        <tissue>Spleen</tissue>
        <tissue>Testis</tissue>
    </source>
</reference>
<reference key="7">
    <citation type="journal article" date="2013" name="Mol. Cell">
        <title>SIRT5-mediated lysine desuccinylation impacts diverse metabolic pathways.</title>
        <authorList>
            <person name="Park J."/>
            <person name="Chen Y."/>
            <person name="Tishkoff D.X."/>
            <person name="Peng C."/>
            <person name="Tan M."/>
            <person name="Dai L."/>
            <person name="Xie Z."/>
            <person name="Zhang Y."/>
            <person name="Zwaans B.M."/>
            <person name="Skinner M.E."/>
            <person name="Lombard D.B."/>
            <person name="Zhao Y."/>
        </authorList>
    </citation>
    <scope>ACETYLATION [LARGE SCALE ANALYSIS] AT LYS-242</scope>
    <scope>IDENTIFICATION BY MASS SPECTROMETRY [LARGE SCALE ANALYSIS]</scope>
    <source>
        <tissue>Embryonic fibroblast</tissue>
    </source>
</reference>
<reference key="8">
    <citation type="journal article" date="2018" name="Nucleic Acids Res.">
        <title>A threonyl-tRNA synthetase-like protein has tRNA aminoacylation and editing activities.</title>
        <authorList>
            <person name="Chen Y."/>
            <person name="Ruan Z.R."/>
            <person name="Wang Y."/>
            <person name="Huang Q."/>
            <person name="Xue M.Q."/>
            <person name="Zhou X.L."/>
            <person name="Wang E.D."/>
        </authorList>
    </citation>
    <scope>FUNCTION</scope>
    <scope>CATALYTIC ACTIVITY</scope>
    <scope>BIOPHYSICOCHEMICAL PROPERTIES</scope>
    <scope>SUBCELLULAR LOCATION</scope>
    <scope>MUTAGENESIS OF HIS-154 AND HIS-158</scope>
</reference>
<evidence type="ECO:0000250" key="1">
    <source>
        <dbReference type="UniProtKB" id="P26639"/>
    </source>
</evidence>
<evidence type="ECO:0000255" key="2">
    <source>
        <dbReference type="PROSITE-ProRule" id="PRU01228"/>
    </source>
</evidence>
<evidence type="ECO:0000256" key="3">
    <source>
        <dbReference type="SAM" id="MobiDB-lite"/>
    </source>
</evidence>
<evidence type="ECO:0000269" key="4">
    <source>
    </source>
</evidence>
<evidence type="ECO:0000269" key="5">
    <source>
    </source>
</evidence>
<evidence type="ECO:0000305" key="6"/>
<evidence type="ECO:0000312" key="7">
    <source>
        <dbReference type="MGI" id="MGI:106314"/>
    </source>
</evidence>
<evidence type="ECO:0007744" key="8">
    <source>
    </source>
</evidence>
<evidence type="ECO:0007744" key="9">
    <source>
    </source>
</evidence>
<feature type="chain" id="PRO_0000101120" description="Threonine--tRNA ligase 1, cytoplasmic">
    <location>
        <begin position="1"/>
        <end position="722"/>
    </location>
</feature>
<feature type="domain" description="TGS" evidence="2">
    <location>
        <begin position="78"/>
        <end position="142"/>
    </location>
</feature>
<feature type="region of interest" description="Disordered" evidence="3">
    <location>
        <begin position="1"/>
        <end position="48"/>
    </location>
</feature>
<feature type="compositionally biased region" description="Polar residues" evidence="3">
    <location>
        <begin position="1"/>
        <end position="10"/>
    </location>
</feature>
<feature type="compositionally biased region" description="Basic and acidic residues" evidence="3">
    <location>
        <begin position="13"/>
        <end position="27"/>
    </location>
</feature>
<feature type="modified residue" description="N6-acetyllysine" evidence="9">
    <location>
        <position position="242"/>
    </location>
</feature>
<feature type="modified residue" description="Phosphothreonine" evidence="1">
    <location>
        <position position="245"/>
    </location>
</feature>
<feature type="modified residue" description="Phosphotyrosine" evidence="8">
    <location>
        <position position="297"/>
    </location>
</feature>
<feature type="modified residue" description="Phosphothreonine" evidence="1">
    <location>
        <position position="452"/>
    </location>
</feature>
<feature type="mutagenesis site" description="Impairs post-transfer editing activity but no effect on aminoacylation activity; when associated with A-158." evidence="5">
    <original>H</original>
    <variation>A</variation>
    <location>
        <position position="154"/>
    </location>
</feature>
<feature type="mutagenesis site" description="Impairs post-transfer editing activity but no effect on aminoacylation activity; when associated with A-154." evidence="5">
    <original>H</original>
    <variation>A</variation>
    <location>
        <position position="158"/>
    </location>
</feature>
<feature type="sequence conflict" description="In Ref. 1; BAB26799." evidence="6" ref="1">
    <original>P</original>
    <variation>S</variation>
    <location>
        <position position="176"/>
    </location>
</feature>
<feature type="sequence conflict" description="In Ref. 1; BAB26799." evidence="6" ref="1">
    <original>I</original>
    <variation>T</variation>
    <location>
        <position position="271"/>
    </location>
</feature>
<feature type="sequence conflict" description="In Ref. 2; AAH55371." evidence="6" ref="2">
    <original>H</original>
    <variation>Y</variation>
    <location>
        <position position="322"/>
    </location>
</feature>
<feature type="sequence conflict" description="In Ref. 1; BAB26799." evidence="6" ref="1">
    <original>R</original>
    <variation>G</variation>
    <location>
        <position position="323"/>
    </location>
</feature>
<feature type="sequence conflict" description="In Ref. 2; AAH55371." evidence="6" ref="2">
    <original>I</original>
    <variation>T</variation>
    <location>
        <position position="325"/>
    </location>
</feature>
<feature type="sequence conflict" description="In Ref. 1; BAC27235." evidence="6" ref="1">
    <original>D</original>
    <variation>Y</variation>
    <location>
        <position position="563"/>
    </location>
</feature>
<proteinExistence type="evidence at protein level"/>
<comment type="function">
    <text evidence="5">Catalyzes the attachment of threonine to tRNA(Thr) in a two-step reaction: threonine is first activated by ATP to form Thr-AMP and then transferred to the acceptor end of tRNA(Thr). Also edits incorrectly charged tRNA(Thr) via its editing domain, at the post-transfer stage.</text>
</comment>
<comment type="catalytic activity">
    <reaction evidence="5">
        <text>tRNA(Thr) + L-threonine + ATP = L-threonyl-tRNA(Thr) + AMP + diphosphate + H(+)</text>
        <dbReference type="Rhea" id="RHEA:24624"/>
        <dbReference type="Rhea" id="RHEA-COMP:9670"/>
        <dbReference type="Rhea" id="RHEA-COMP:9704"/>
        <dbReference type="ChEBI" id="CHEBI:15378"/>
        <dbReference type="ChEBI" id="CHEBI:30616"/>
        <dbReference type="ChEBI" id="CHEBI:33019"/>
        <dbReference type="ChEBI" id="CHEBI:57926"/>
        <dbReference type="ChEBI" id="CHEBI:78442"/>
        <dbReference type="ChEBI" id="CHEBI:78534"/>
        <dbReference type="ChEBI" id="CHEBI:456215"/>
        <dbReference type="EC" id="6.1.1.3"/>
    </reaction>
</comment>
<comment type="biophysicochemical properties">
    <kinetics>
        <KM evidence="5">0.74 uM for tRNA(Thr)</KM>
        <KM evidence="5">0.3 mM for L-threonine</KM>
    </kinetics>
</comment>
<comment type="subunit">
    <text evidence="1">Homodimer.</text>
</comment>
<comment type="subcellular location">
    <subcellularLocation>
        <location evidence="5">Cytoplasm</location>
    </subcellularLocation>
</comment>
<comment type="PTM">
    <text evidence="4">ISGylated.</text>
</comment>
<comment type="similarity">
    <text evidence="6">Belongs to the class-II aminoacyl-tRNA synthetase family.</text>
</comment>
<gene>
    <name type="primary">Tars1</name>
    <name evidence="7" type="synonym">Tars</name>
</gene>
<dbReference type="EC" id="6.1.1.3" evidence="5"/>
<dbReference type="EMBL" id="AK010256">
    <property type="protein sequence ID" value="BAB26799.1"/>
    <property type="molecule type" value="mRNA"/>
</dbReference>
<dbReference type="EMBL" id="AK011146">
    <property type="protein sequence ID" value="BAB27429.2"/>
    <property type="molecule type" value="mRNA"/>
</dbReference>
<dbReference type="EMBL" id="AK031064">
    <property type="protein sequence ID" value="BAC27235.1"/>
    <property type="molecule type" value="mRNA"/>
</dbReference>
<dbReference type="EMBL" id="AK152945">
    <property type="protein sequence ID" value="BAE31616.1"/>
    <property type="molecule type" value="mRNA"/>
</dbReference>
<dbReference type="EMBL" id="AK166693">
    <property type="protein sequence ID" value="BAE38950.1"/>
    <property type="molecule type" value="mRNA"/>
</dbReference>
<dbReference type="EMBL" id="AK167597">
    <property type="protein sequence ID" value="BAE39654.1"/>
    <property type="molecule type" value="mRNA"/>
</dbReference>
<dbReference type="EMBL" id="AK168969">
    <property type="protein sequence ID" value="BAE40773.1"/>
    <property type="molecule type" value="mRNA"/>
</dbReference>
<dbReference type="EMBL" id="BC055371">
    <property type="protein sequence ID" value="AAH55371.1"/>
    <property type="molecule type" value="mRNA"/>
</dbReference>
<dbReference type="CCDS" id="CCDS27385.1"/>
<dbReference type="RefSeq" id="NP_149065.2">
    <property type="nucleotide sequence ID" value="NM_033074.3"/>
</dbReference>
<dbReference type="SMR" id="Q9D0R2"/>
<dbReference type="BioGRID" id="226055">
    <property type="interactions" value="18"/>
</dbReference>
<dbReference type="FunCoup" id="Q9D0R2">
    <property type="interactions" value="2431"/>
</dbReference>
<dbReference type="STRING" id="10090.ENSMUSP00000022849"/>
<dbReference type="ChEMBL" id="CHEMBL3751649"/>
<dbReference type="GlyGen" id="Q9D0R2">
    <property type="glycosylation" value="3 sites, 1 N-linked glycan (1 site), 1 O-linked glycan (1 site)"/>
</dbReference>
<dbReference type="iPTMnet" id="Q9D0R2"/>
<dbReference type="PhosphoSitePlus" id="Q9D0R2"/>
<dbReference type="SwissPalm" id="Q9D0R2"/>
<dbReference type="jPOST" id="Q9D0R2"/>
<dbReference type="PaxDb" id="10090-ENSMUSP00000022849"/>
<dbReference type="PeptideAtlas" id="Q9D0R2"/>
<dbReference type="ProteomicsDB" id="263196"/>
<dbReference type="Pumba" id="Q9D0R2"/>
<dbReference type="Antibodypedia" id="9874">
    <property type="antibodies" value="186 antibodies from 30 providers"/>
</dbReference>
<dbReference type="DNASU" id="110960"/>
<dbReference type="Ensembl" id="ENSMUST00000022849.7">
    <property type="protein sequence ID" value="ENSMUSP00000022849.6"/>
    <property type="gene ID" value="ENSMUSG00000022241.7"/>
</dbReference>
<dbReference type="GeneID" id="110960"/>
<dbReference type="KEGG" id="mmu:110960"/>
<dbReference type="UCSC" id="uc007vhc.1">
    <property type="organism name" value="mouse"/>
</dbReference>
<dbReference type="AGR" id="MGI:106314"/>
<dbReference type="CTD" id="6897"/>
<dbReference type="MGI" id="MGI:106314">
    <property type="gene designation" value="Tars1"/>
</dbReference>
<dbReference type="VEuPathDB" id="HostDB:ENSMUSG00000022241"/>
<dbReference type="eggNOG" id="KOG1637">
    <property type="taxonomic scope" value="Eukaryota"/>
</dbReference>
<dbReference type="GeneTree" id="ENSGT00940000154969"/>
<dbReference type="HOGENOM" id="CLU_008554_0_1_1"/>
<dbReference type="InParanoid" id="Q9D0R2"/>
<dbReference type="OMA" id="MMNQRLW"/>
<dbReference type="OrthoDB" id="5423599at2759"/>
<dbReference type="PhylomeDB" id="Q9D0R2"/>
<dbReference type="TreeFam" id="TF300858"/>
<dbReference type="BioGRID-ORCS" id="110960">
    <property type="hits" value="26 hits in 80 CRISPR screens"/>
</dbReference>
<dbReference type="ChiTaRS" id="Tars">
    <property type="organism name" value="mouse"/>
</dbReference>
<dbReference type="PRO" id="PR:Q9D0R2"/>
<dbReference type="Proteomes" id="UP000000589">
    <property type="component" value="Chromosome 15"/>
</dbReference>
<dbReference type="RNAct" id="Q9D0R2">
    <property type="molecule type" value="protein"/>
</dbReference>
<dbReference type="Bgee" id="ENSMUSG00000022241">
    <property type="expression patterns" value="Expressed in primitive streak and 280 other cell types or tissues"/>
</dbReference>
<dbReference type="ExpressionAtlas" id="Q9D0R2">
    <property type="expression patterns" value="baseline and differential"/>
</dbReference>
<dbReference type="GO" id="GO:0005737">
    <property type="term" value="C:cytoplasm"/>
    <property type="evidence" value="ECO:0000314"/>
    <property type="project" value="UniProtKB"/>
</dbReference>
<dbReference type="GO" id="GO:0005524">
    <property type="term" value="F:ATP binding"/>
    <property type="evidence" value="ECO:0007669"/>
    <property type="project" value="UniProtKB-KW"/>
</dbReference>
<dbReference type="GO" id="GO:0042802">
    <property type="term" value="F:identical protein binding"/>
    <property type="evidence" value="ECO:0007669"/>
    <property type="project" value="Ensembl"/>
</dbReference>
<dbReference type="GO" id="GO:0004829">
    <property type="term" value="F:threonine-tRNA ligase activity"/>
    <property type="evidence" value="ECO:0000314"/>
    <property type="project" value="UniProtKB"/>
</dbReference>
<dbReference type="GO" id="GO:0008270">
    <property type="term" value="F:zinc ion binding"/>
    <property type="evidence" value="ECO:0007669"/>
    <property type="project" value="Ensembl"/>
</dbReference>
<dbReference type="GO" id="GO:0006435">
    <property type="term" value="P:threonyl-tRNA aminoacylation"/>
    <property type="evidence" value="ECO:0000314"/>
    <property type="project" value="UniProtKB"/>
</dbReference>
<dbReference type="CDD" id="cd01667">
    <property type="entry name" value="TGS_ThrRS"/>
    <property type="match status" value="1"/>
</dbReference>
<dbReference type="CDD" id="cd00860">
    <property type="entry name" value="ThrRS_anticodon"/>
    <property type="match status" value="1"/>
</dbReference>
<dbReference type="CDD" id="cd00771">
    <property type="entry name" value="ThrRS_core"/>
    <property type="match status" value="1"/>
</dbReference>
<dbReference type="FunFam" id="3.30.930.10:FF:000009">
    <property type="entry name" value="Threonine--tRNA ligase 2, cytoplasmic"/>
    <property type="match status" value="1"/>
</dbReference>
<dbReference type="FunFam" id="3.40.50.800:FF:000003">
    <property type="entry name" value="Threonine--tRNA ligase 2, cytoplasmic"/>
    <property type="match status" value="1"/>
</dbReference>
<dbReference type="FunFam" id="3.10.20.30:FF:000006">
    <property type="entry name" value="Threonine--tRNA ligase, cytoplasmic"/>
    <property type="match status" value="1"/>
</dbReference>
<dbReference type="FunFam" id="3.30.980.10:FF:000003">
    <property type="entry name" value="Threonine--tRNA ligase, cytoplasmic"/>
    <property type="match status" value="1"/>
</dbReference>
<dbReference type="Gene3D" id="3.10.20.30">
    <property type="match status" value="1"/>
</dbReference>
<dbReference type="Gene3D" id="3.40.50.800">
    <property type="entry name" value="Anticodon-binding domain"/>
    <property type="match status" value="1"/>
</dbReference>
<dbReference type="Gene3D" id="3.30.930.10">
    <property type="entry name" value="Bira Bifunctional Protein, Domain 2"/>
    <property type="match status" value="1"/>
</dbReference>
<dbReference type="Gene3D" id="3.30.980.10">
    <property type="entry name" value="Threonyl-trna Synthetase, Chain A, domain 2"/>
    <property type="match status" value="1"/>
</dbReference>
<dbReference type="HAMAP" id="MF_00184">
    <property type="entry name" value="Thr_tRNA_synth"/>
    <property type="match status" value="1"/>
</dbReference>
<dbReference type="InterPro" id="IPR002314">
    <property type="entry name" value="aa-tRNA-synt_IIb"/>
</dbReference>
<dbReference type="InterPro" id="IPR006195">
    <property type="entry name" value="aa-tRNA-synth_II"/>
</dbReference>
<dbReference type="InterPro" id="IPR045864">
    <property type="entry name" value="aa-tRNA-synth_II/BPL/LPL"/>
</dbReference>
<dbReference type="InterPro" id="IPR004154">
    <property type="entry name" value="Anticodon-bd"/>
</dbReference>
<dbReference type="InterPro" id="IPR036621">
    <property type="entry name" value="Anticodon-bd_dom_sf"/>
</dbReference>
<dbReference type="InterPro" id="IPR012675">
    <property type="entry name" value="Beta-grasp_dom_sf"/>
</dbReference>
<dbReference type="InterPro" id="IPR004095">
    <property type="entry name" value="TGS"/>
</dbReference>
<dbReference type="InterPro" id="IPR012676">
    <property type="entry name" value="TGS-like"/>
</dbReference>
<dbReference type="InterPro" id="IPR002320">
    <property type="entry name" value="Thr-tRNA-ligase_IIa"/>
</dbReference>
<dbReference type="InterPro" id="IPR018163">
    <property type="entry name" value="Thr/Ala-tRNA-synth_IIc_edit"/>
</dbReference>
<dbReference type="InterPro" id="IPR047246">
    <property type="entry name" value="ThrRS_anticodon"/>
</dbReference>
<dbReference type="InterPro" id="IPR033728">
    <property type="entry name" value="ThrRS_core"/>
</dbReference>
<dbReference type="InterPro" id="IPR012947">
    <property type="entry name" value="tRNA_SAD"/>
</dbReference>
<dbReference type="NCBIfam" id="TIGR00418">
    <property type="entry name" value="thrS"/>
    <property type="match status" value="1"/>
</dbReference>
<dbReference type="PANTHER" id="PTHR11451:SF36">
    <property type="entry name" value="THREONINE--TRNA LIGASE 1, CYTOPLASMIC"/>
    <property type="match status" value="1"/>
</dbReference>
<dbReference type="PANTHER" id="PTHR11451">
    <property type="entry name" value="THREONINE-TRNA LIGASE"/>
    <property type="match status" value="1"/>
</dbReference>
<dbReference type="Pfam" id="PF03129">
    <property type="entry name" value="HGTP_anticodon"/>
    <property type="match status" value="1"/>
</dbReference>
<dbReference type="Pfam" id="PF02824">
    <property type="entry name" value="TGS"/>
    <property type="match status" value="1"/>
</dbReference>
<dbReference type="Pfam" id="PF00587">
    <property type="entry name" value="tRNA-synt_2b"/>
    <property type="match status" value="1"/>
</dbReference>
<dbReference type="Pfam" id="PF07973">
    <property type="entry name" value="tRNA_SAD"/>
    <property type="match status" value="1"/>
</dbReference>
<dbReference type="PRINTS" id="PR01047">
    <property type="entry name" value="TRNASYNTHTHR"/>
</dbReference>
<dbReference type="SMART" id="SM00863">
    <property type="entry name" value="tRNA_SAD"/>
    <property type="match status" value="1"/>
</dbReference>
<dbReference type="SUPFAM" id="SSF52954">
    <property type="entry name" value="Class II aaRS ABD-related"/>
    <property type="match status" value="1"/>
</dbReference>
<dbReference type="SUPFAM" id="SSF55681">
    <property type="entry name" value="Class II aaRS and biotin synthetases"/>
    <property type="match status" value="1"/>
</dbReference>
<dbReference type="SUPFAM" id="SSF81271">
    <property type="entry name" value="TGS-like"/>
    <property type="match status" value="1"/>
</dbReference>
<dbReference type="SUPFAM" id="SSF55186">
    <property type="entry name" value="ThrRS/AlaRS common domain"/>
    <property type="match status" value="1"/>
</dbReference>
<dbReference type="PROSITE" id="PS50862">
    <property type="entry name" value="AA_TRNA_LIGASE_II"/>
    <property type="match status" value="1"/>
</dbReference>
<dbReference type="PROSITE" id="PS51880">
    <property type="entry name" value="TGS"/>
    <property type="match status" value="1"/>
</dbReference>
<accession>Q9D0R2</accession>
<accession>Q3TL42</accession>
<accession>Q7TMQ2</accession>
<accession>Q8BMI6</accession>
<accession>Q9CX03</accession>
<keyword id="KW-0007">Acetylation</keyword>
<keyword id="KW-0030">Aminoacyl-tRNA synthetase</keyword>
<keyword id="KW-0067">ATP-binding</keyword>
<keyword id="KW-0963">Cytoplasm</keyword>
<keyword id="KW-0436">Ligase</keyword>
<keyword id="KW-0547">Nucleotide-binding</keyword>
<keyword id="KW-0597">Phosphoprotein</keyword>
<keyword id="KW-0648">Protein biosynthesis</keyword>
<keyword id="KW-1185">Reference proteome</keyword>
<keyword id="KW-0832">Ubl conjugation</keyword>
<protein>
    <recommendedName>
        <fullName>Threonine--tRNA ligase 1, cytoplasmic</fullName>
        <ecNumber evidence="5">6.1.1.3</ecNumber>
    </recommendedName>
    <alternativeName>
        <fullName>Threonine--tRNA ligase, cytoplasmic</fullName>
    </alternativeName>
    <alternativeName>
        <fullName>Threonyl-tRNA synthetase</fullName>
        <shortName>ThrRS</shortName>
    </alternativeName>
    <alternativeName>
        <fullName>Threonyl-tRNA synthetase 1</fullName>
    </alternativeName>
</protein>
<sequence>MSQEKASSPSGKMDGEKPVDASEEKRKEGGKKKSKDGGGDGGRAELNPWPEYINTRLDMYNKLKAEHDSILAEKAAKDSKPIKVTLPDGKQVDAESWKTTPYQIACGISQGLADNTVVAKVNKVVWDLDRPLETDCTLELLKFEDEEAQAVYWHSSAHIMGEAMERVYGGCLCYGPPIENGFYYDMYLEEGGVSSNDFSSLETLCKKIIKEKQTFERLEVKKETLLEMFKYNKFKCRILNEKVNTPTTTVYRCGPLIDLCRGPHVRHTGKIKTLKIHKNSSTYWEGKADMETLQRIYGISFPDPKLLKEWEKFQEEAKNRDHRKIGRDQELYFFHELSPGSCFFLPKGAYIYNTLMEFIRSEYRKRGFQEVVTPNIFNSRLWMTSGHWQHYSENMFSFEVEKEQFALKPMNCPGHCLMFDHRPRSWRELPLRLADFGVLHRNELSGALTGLTRVRRFQQDDAHIFCAMEQIEDEIKGCLDFLRTVYSVFGFSFKLNLSTRPEKFLGDIEIWNQAEKQLENSLNEFGEKWELNPGDGAFYGPKIDIQIKDAIGRYHQCATIQLDFQLPIRFNLTYVSHDGDDKKRPVIVHRAILGSVERMIAILTENYGGKWPFWLSPRQVMVVPVGPTCDEYAQKVRQQFHDAKFMADTDLDPGCTLNKKIRNAQLAQYNFILVVGEKEKASGTVNIRTRDNKVHGERTVEETVRRLQQLKQTRSKQAEEEF</sequence>